<name>ORN3_PLAOR</name>
<proteinExistence type="evidence at protein level"/>
<comment type="function">
    <text>Potent inhibitor of fibrinogen interaction with platelet receptors expressed on glycoprotein IIb-IIIa complex. May prevent blood from clotting during either feeding and/or storage of ingested blood.</text>
</comment>
<comment type="subcellular location">
    <subcellularLocation>
        <location>Secreted</location>
    </subcellularLocation>
</comment>
<comment type="similarity">
    <text evidence="1">Belongs to the ornatin family.</text>
</comment>
<keyword id="KW-0130">Cell adhesion</keyword>
<keyword id="KW-0903">Direct protein sequencing</keyword>
<keyword id="KW-0964">Secreted</keyword>
<sequence>IPQCADIKESGQPNDKCRCNGITCTVGKCKIGRGDDNDKCT</sequence>
<organism>
    <name type="scientific">Placobdella ornata</name>
    <name type="common">Turtle leech</name>
    <dbReference type="NCBI Taxonomy" id="6415"/>
    <lineage>
        <taxon>Eukaryota</taxon>
        <taxon>Metazoa</taxon>
        <taxon>Spiralia</taxon>
        <taxon>Lophotrochozoa</taxon>
        <taxon>Annelida</taxon>
        <taxon>Clitellata</taxon>
        <taxon>Hirudinea</taxon>
        <taxon>Rhynchobdellida</taxon>
        <taxon>Glossiphoniidae</taxon>
        <taxon>Placobdella</taxon>
    </lineage>
</organism>
<dbReference type="PIR" id="S19621">
    <property type="entry name" value="S19621"/>
</dbReference>
<dbReference type="SMR" id="P25510"/>
<dbReference type="GO" id="GO:0005576">
    <property type="term" value="C:extracellular region"/>
    <property type="evidence" value="ECO:0007669"/>
    <property type="project" value="UniProtKB-SubCell"/>
</dbReference>
<dbReference type="GO" id="GO:0007155">
    <property type="term" value="P:cell adhesion"/>
    <property type="evidence" value="ECO:0007669"/>
    <property type="project" value="UniProtKB-KW"/>
</dbReference>
<dbReference type="GO" id="GO:0030193">
    <property type="term" value="P:regulation of blood coagulation"/>
    <property type="evidence" value="ECO:0007669"/>
    <property type="project" value="InterPro"/>
</dbReference>
<dbReference type="InterPro" id="IPR002463">
    <property type="entry name" value="Ornatin"/>
</dbReference>
<dbReference type="Pfam" id="PF02088">
    <property type="entry name" value="Ornatin"/>
    <property type="match status" value="1"/>
</dbReference>
<dbReference type="PRINTS" id="PR01184">
    <property type="entry name" value="ORNATIN"/>
</dbReference>
<reference key="1">
    <citation type="journal article" date="1991" name="Eur. J. Biochem.">
        <title>Ornatins: potent glycoprotein IIb-IIIa antagonists and platelet aggregation inhibitors from the leech Placobdella ornata.</title>
        <authorList>
            <person name="Mazur P."/>
            <person name="Henzel W.J."/>
            <person name="Seymour J.L."/>
            <person name="Lazarus R.A."/>
        </authorList>
    </citation>
    <scope>PROTEIN SEQUENCE</scope>
</reference>
<accession>P25510</accession>
<feature type="chain" id="PRO_0000215261" description="Ornatin-A3">
    <location>
        <begin position="1"/>
        <end position="41"/>
    </location>
</feature>
<feature type="short sequence motif" description="Cell attachment site">
    <location>
        <begin position="33"/>
        <end position="35"/>
    </location>
</feature>
<evidence type="ECO:0000305" key="1"/>
<protein>
    <recommendedName>
        <fullName>Ornatin-A3</fullName>
    </recommendedName>
</protein>